<reference key="1">
    <citation type="journal article" date="2003" name="Cancer Lett.">
        <title>Neuroblastoma oligo-capping cDNA project: toward the understanding of the genesis and biology of neuroblastoma.</title>
        <authorList>
            <person name="Ohira M."/>
            <person name="Morohashi A."/>
            <person name="Nakamura Y."/>
            <person name="Isogai E."/>
            <person name="Furuya K."/>
            <person name="Hamano S."/>
            <person name="Machida T."/>
            <person name="Aoyama M."/>
            <person name="Fukumura M."/>
            <person name="Miyazaki K."/>
            <person name="Suzuki Y."/>
            <person name="Sugano S."/>
            <person name="Hirato J."/>
            <person name="Nakagawara A."/>
        </authorList>
    </citation>
    <scope>NUCLEOTIDE SEQUENCE [LARGE SCALE MRNA] (ISOFORM 1)</scope>
    <source>
        <tissue>Neuroblastoma</tissue>
    </source>
</reference>
<reference key="2">
    <citation type="journal article" date="2004" name="Nat. Genet.">
        <title>Complete sequencing and characterization of 21,243 full-length human cDNAs.</title>
        <authorList>
            <person name="Ota T."/>
            <person name="Suzuki Y."/>
            <person name="Nishikawa T."/>
            <person name="Otsuki T."/>
            <person name="Sugiyama T."/>
            <person name="Irie R."/>
            <person name="Wakamatsu A."/>
            <person name="Hayashi K."/>
            <person name="Sato H."/>
            <person name="Nagai K."/>
            <person name="Kimura K."/>
            <person name="Makita H."/>
            <person name="Sekine M."/>
            <person name="Obayashi M."/>
            <person name="Nishi T."/>
            <person name="Shibahara T."/>
            <person name="Tanaka T."/>
            <person name="Ishii S."/>
            <person name="Yamamoto J."/>
            <person name="Saito K."/>
            <person name="Kawai Y."/>
            <person name="Isono Y."/>
            <person name="Nakamura Y."/>
            <person name="Nagahari K."/>
            <person name="Murakami K."/>
            <person name="Yasuda T."/>
            <person name="Iwayanagi T."/>
            <person name="Wagatsuma M."/>
            <person name="Shiratori A."/>
            <person name="Sudo H."/>
            <person name="Hosoiri T."/>
            <person name="Kaku Y."/>
            <person name="Kodaira H."/>
            <person name="Kondo H."/>
            <person name="Sugawara M."/>
            <person name="Takahashi M."/>
            <person name="Kanda K."/>
            <person name="Yokoi T."/>
            <person name="Furuya T."/>
            <person name="Kikkawa E."/>
            <person name="Omura Y."/>
            <person name="Abe K."/>
            <person name="Kamihara K."/>
            <person name="Katsuta N."/>
            <person name="Sato K."/>
            <person name="Tanikawa M."/>
            <person name="Yamazaki M."/>
            <person name="Ninomiya K."/>
            <person name="Ishibashi T."/>
            <person name="Yamashita H."/>
            <person name="Murakawa K."/>
            <person name="Fujimori K."/>
            <person name="Tanai H."/>
            <person name="Kimata M."/>
            <person name="Watanabe M."/>
            <person name="Hiraoka S."/>
            <person name="Chiba Y."/>
            <person name="Ishida S."/>
            <person name="Ono Y."/>
            <person name="Takiguchi S."/>
            <person name="Watanabe S."/>
            <person name="Yosida M."/>
            <person name="Hotuta T."/>
            <person name="Kusano J."/>
            <person name="Kanehori K."/>
            <person name="Takahashi-Fujii A."/>
            <person name="Hara H."/>
            <person name="Tanase T.-O."/>
            <person name="Nomura Y."/>
            <person name="Togiya S."/>
            <person name="Komai F."/>
            <person name="Hara R."/>
            <person name="Takeuchi K."/>
            <person name="Arita M."/>
            <person name="Imose N."/>
            <person name="Musashino K."/>
            <person name="Yuuki H."/>
            <person name="Oshima A."/>
            <person name="Sasaki N."/>
            <person name="Aotsuka S."/>
            <person name="Yoshikawa Y."/>
            <person name="Matsunawa H."/>
            <person name="Ichihara T."/>
            <person name="Shiohata N."/>
            <person name="Sano S."/>
            <person name="Moriya S."/>
            <person name="Momiyama H."/>
            <person name="Satoh N."/>
            <person name="Takami S."/>
            <person name="Terashima Y."/>
            <person name="Suzuki O."/>
            <person name="Nakagawa S."/>
            <person name="Senoh A."/>
            <person name="Mizoguchi H."/>
            <person name="Goto Y."/>
            <person name="Shimizu F."/>
            <person name="Wakebe H."/>
            <person name="Hishigaki H."/>
            <person name="Watanabe T."/>
            <person name="Sugiyama A."/>
            <person name="Takemoto M."/>
            <person name="Kawakami B."/>
            <person name="Yamazaki M."/>
            <person name="Watanabe K."/>
            <person name="Kumagai A."/>
            <person name="Itakura S."/>
            <person name="Fukuzumi Y."/>
            <person name="Fujimori Y."/>
            <person name="Komiyama M."/>
            <person name="Tashiro H."/>
            <person name="Tanigami A."/>
            <person name="Fujiwara T."/>
            <person name="Ono T."/>
            <person name="Yamada K."/>
            <person name="Fujii Y."/>
            <person name="Ozaki K."/>
            <person name="Hirao M."/>
            <person name="Ohmori Y."/>
            <person name="Kawabata A."/>
            <person name="Hikiji T."/>
            <person name="Kobatake N."/>
            <person name="Inagaki H."/>
            <person name="Ikema Y."/>
            <person name="Okamoto S."/>
            <person name="Okitani R."/>
            <person name="Kawakami T."/>
            <person name="Noguchi S."/>
            <person name="Itoh T."/>
            <person name="Shigeta K."/>
            <person name="Senba T."/>
            <person name="Matsumura K."/>
            <person name="Nakajima Y."/>
            <person name="Mizuno T."/>
            <person name="Morinaga M."/>
            <person name="Sasaki M."/>
            <person name="Togashi T."/>
            <person name="Oyama M."/>
            <person name="Hata H."/>
            <person name="Watanabe M."/>
            <person name="Komatsu T."/>
            <person name="Mizushima-Sugano J."/>
            <person name="Satoh T."/>
            <person name="Shirai Y."/>
            <person name="Takahashi Y."/>
            <person name="Nakagawa K."/>
            <person name="Okumura K."/>
            <person name="Nagase T."/>
            <person name="Nomura N."/>
            <person name="Kikuchi H."/>
            <person name="Masuho Y."/>
            <person name="Yamashita R."/>
            <person name="Nakai K."/>
            <person name="Yada T."/>
            <person name="Nakamura Y."/>
            <person name="Ohara O."/>
            <person name="Isogai T."/>
            <person name="Sugano S."/>
        </authorList>
    </citation>
    <scope>NUCLEOTIDE SEQUENCE [LARGE SCALE MRNA] (ISOFORM 2)</scope>
    <source>
        <tissue>Thymus</tissue>
    </source>
</reference>
<reference key="3">
    <citation type="submission" date="2005-09" db="EMBL/GenBank/DDBJ databases">
        <authorList>
            <person name="Mural R.J."/>
            <person name="Istrail S."/>
            <person name="Sutton G.G."/>
            <person name="Florea L."/>
            <person name="Halpern A.L."/>
            <person name="Mobarry C.M."/>
            <person name="Lippert R."/>
            <person name="Walenz B."/>
            <person name="Shatkay H."/>
            <person name="Dew I."/>
            <person name="Miller J.R."/>
            <person name="Flanigan M.J."/>
            <person name="Edwards N.J."/>
            <person name="Bolanos R."/>
            <person name="Fasulo D."/>
            <person name="Halldorsson B.V."/>
            <person name="Hannenhalli S."/>
            <person name="Turner R."/>
            <person name="Yooseph S."/>
            <person name="Lu F."/>
            <person name="Nusskern D.R."/>
            <person name="Shue B.C."/>
            <person name="Zheng X.H."/>
            <person name="Zhong F."/>
            <person name="Delcher A.L."/>
            <person name="Huson D.H."/>
            <person name="Kravitz S.A."/>
            <person name="Mouchard L."/>
            <person name="Reinert K."/>
            <person name="Remington K.A."/>
            <person name="Clark A.G."/>
            <person name="Waterman M.S."/>
            <person name="Eichler E.E."/>
            <person name="Adams M.D."/>
            <person name="Hunkapiller M.W."/>
            <person name="Myers E.W."/>
            <person name="Venter J.C."/>
        </authorList>
    </citation>
    <scope>NUCLEOTIDE SEQUENCE [LARGE SCALE GENOMIC DNA]</scope>
</reference>
<reference key="4">
    <citation type="journal article" date="2004" name="Genome Res.">
        <title>The status, quality, and expansion of the NIH full-length cDNA project: the Mammalian Gene Collection (MGC).</title>
        <authorList>
            <consortium name="The MGC Project Team"/>
        </authorList>
    </citation>
    <scope>NUCLEOTIDE SEQUENCE [LARGE SCALE MRNA] (ISOFORM 2)</scope>
    <source>
        <tissue>Placenta</tissue>
        <tissue>Testis</tissue>
    </source>
</reference>
<reference key="5">
    <citation type="submission" date="1999-07" db="EMBL/GenBank/DDBJ databases">
        <title>Novel genes expressed in hematopoietic stem/progenitor cells from myelodysplastic syndrome patients.</title>
        <authorList>
            <person name="Huang C."/>
            <person name="Zhang C."/>
            <person name="Tu Y."/>
            <person name="Gu W."/>
            <person name="Wang Y."/>
            <person name="Han Z."/>
            <person name="Chen Z."/>
            <person name="Zhou J."/>
            <person name="Gu J."/>
            <person name="Huang Q."/>
            <person name="Yu Y."/>
            <person name="Xu S."/>
            <person name="Ren S."/>
            <person name="Fu G."/>
        </authorList>
    </citation>
    <scope>NUCLEOTIDE SEQUENCE [LARGE SCALE MRNA] OF 1-217 (ISOFORM 1)</scope>
    <source>
        <tissue>Hematopoietic stem cell</tissue>
    </source>
</reference>
<reference key="6">
    <citation type="journal article" date="2012" name="Proc. Natl. Acad. Sci. U.S.A.">
        <title>N-terminal acetylome analyses and functional insights of the N-terminal acetyltransferase NatB.</title>
        <authorList>
            <person name="Van Damme P."/>
            <person name="Lasa M."/>
            <person name="Polevoda B."/>
            <person name="Gazquez C."/>
            <person name="Elosegui-Artola A."/>
            <person name="Kim D.S."/>
            <person name="De Juan-Pardo E."/>
            <person name="Demeyer K."/>
            <person name="Hole K."/>
            <person name="Larrea E."/>
            <person name="Timmerman E."/>
            <person name="Prieto J."/>
            <person name="Arnesen T."/>
            <person name="Sherman F."/>
            <person name="Gevaert K."/>
            <person name="Aldabe R."/>
        </authorList>
    </citation>
    <scope>ACETYLATION [LARGE SCALE ANALYSIS] AT MET-1</scope>
    <scope>IDENTIFICATION BY MASS SPECTROMETRY [LARGE SCALE ANALYSIS]</scope>
</reference>
<feature type="chain" id="PRO_0000286567" description="Manganese-dependent ADP-ribose/CDP-alcohol diphosphatase">
    <location>
        <begin position="1"/>
        <end position="342"/>
    </location>
</feature>
<feature type="binding site" evidence="1">
    <location>
        <position position="25"/>
    </location>
    <ligand>
        <name>Zn(2+)</name>
        <dbReference type="ChEBI" id="CHEBI:29105"/>
        <label>1</label>
    </ligand>
</feature>
<feature type="binding site" evidence="1">
    <location>
        <position position="27"/>
    </location>
    <ligand>
        <name>Zn(2+)</name>
        <dbReference type="ChEBI" id="CHEBI:29105"/>
        <label>1</label>
    </ligand>
</feature>
<feature type="binding site" evidence="1">
    <location>
        <position position="74"/>
    </location>
    <ligand>
        <name>Zn(2+)</name>
        <dbReference type="ChEBI" id="CHEBI:29105"/>
        <label>1</label>
    </ligand>
</feature>
<feature type="binding site" evidence="1">
    <location>
        <position position="74"/>
    </location>
    <ligand>
        <name>Zn(2+)</name>
        <dbReference type="ChEBI" id="CHEBI:29105"/>
        <label>2</label>
    </ligand>
</feature>
<feature type="binding site" evidence="1">
    <location>
        <position position="110"/>
    </location>
    <ligand>
        <name>Zn(2+)</name>
        <dbReference type="ChEBI" id="CHEBI:29105"/>
        <label>2</label>
    </ligand>
</feature>
<feature type="binding site" evidence="1">
    <location>
        <position position="241"/>
    </location>
    <ligand>
        <name>Zn(2+)</name>
        <dbReference type="ChEBI" id="CHEBI:29105"/>
        <label>2</label>
    </ligand>
</feature>
<feature type="binding site" evidence="1">
    <location>
        <position position="278"/>
    </location>
    <ligand>
        <name>Zn(2+)</name>
        <dbReference type="ChEBI" id="CHEBI:29105"/>
        <label>2</label>
    </ligand>
</feature>
<feature type="binding site" evidence="1">
    <location>
        <position position="280"/>
    </location>
    <ligand>
        <name>Zn(2+)</name>
        <dbReference type="ChEBI" id="CHEBI:29105"/>
        <label>1</label>
    </ligand>
</feature>
<feature type="modified residue" description="N-acetylmethionine" evidence="5">
    <location>
        <position position="1"/>
    </location>
</feature>
<feature type="splice variant" id="VSP_025092" description="In isoform 2." evidence="2 3">
    <original>LSEP</original>
    <variation>ELFL</variation>
    <location>
        <begin position="202"/>
        <end position="205"/>
    </location>
</feature>
<feature type="splice variant" id="VSP_025093" description="In isoform 2." evidence="2 3">
    <location>
        <begin position="206"/>
        <end position="342"/>
    </location>
</feature>
<feature type="sequence variant" id="VAR_032125" description="In dbSNP:rs34940296.">
    <original>L</original>
    <variation>R</variation>
    <location>
        <position position="92"/>
    </location>
</feature>
<feature type="sequence variant" id="VAR_032126" description="In dbSNP:rs406446.">
    <original>E</original>
    <variation>G</variation>
    <location>
        <position position="337"/>
    </location>
</feature>
<feature type="sequence conflict" description="In Ref. 4; BAF85318." evidence="4" ref="4">
    <original>F</original>
    <variation>S</variation>
    <location>
        <position position="113"/>
    </location>
</feature>
<feature type="sequence conflict" description="In Ref. 1; AAF87317." evidence="4" ref="1">
    <original>L</original>
    <variation>F</variation>
    <location>
        <position position="202"/>
    </location>
</feature>
<comment type="function">
    <text evidence="1">Hydrolyzes ADP-ribose, IDP-ribose, CDP-glycerol, CDP-choline and CDP-ethanolamine, but not other non-reducing ADP-sugars or CDP-glucose. May be involved in immune cell signaling as suggested by the second-messenger role of ADP-ribose, which activates TRPM2 as a mediator of oxidative/nitrosative stress (By similarity).</text>
</comment>
<comment type="catalytic activity">
    <reaction>
        <text>CDP-choline + H2O = phosphocholine + CMP + 2 H(+)</text>
        <dbReference type="Rhea" id="RHEA:32487"/>
        <dbReference type="ChEBI" id="CHEBI:15377"/>
        <dbReference type="ChEBI" id="CHEBI:15378"/>
        <dbReference type="ChEBI" id="CHEBI:58779"/>
        <dbReference type="ChEBI" id="CHEBI:60377"/>
        <dbReference type="ChEBI" id="CHEBI:295975"/>
        <dbReference type="EC" id="3.6.1.53"/>
    </reaction>
</comment>
<comment type="catalytic activity">
    <reaction>
        <text>ADP-D-ribose + H2O = D-ribose 5-phosphate + AMP + 2 H(+)</text>
        <dbReference type="Rhea" id="RHEA:10412"/>
        <dbReference type="ChEBI" id="CHEBI:15377"/>
        <dbReference type="ChEBI" id="CHEBI:15378"/>
        <dbReference type="ChEBI" id="CHEBI:57967"/>
        <dbReference type="ChEBI" id="CHEBI:78346"/>
        <dbReference type="ChEBI" id="CHEBI:456215"/>
        <dbReference type="EC" id="3.6.1.13"/>
    </reaction>
</comment>
<comment type="catalytic activity">
    <reaction>
        <text>ADP-D-ribose + H2O = D-ribose 5-phosphate + AMP + 2 H(+)</text>
        <dbReference type="Rhea" id="RHEA:10412"/>
        <dbReference type="ChEBI" id="CHEBI:15377"/>
        <dbReference type="ChEBI" id="CHEBI:15378"/>
        <dbReference type="ChEBI" id="CHEBI:57967"/>
        <dbReference type="ChEBI" id="CHEBI:78346"/>
        <dbReference type="ChEBI" id="CHEBI:456215"/>
        <dbReference type="EC" id="3.6.1.53"/>
    </reaction>
</comment>
<comment type="catalytic activity">
    <reaction>
        <text>CDP-glycerol + H2O = sn-glycerol 3-phosphate + CMP + 2 H(+)</text>
        <dbReference type="Rhea" id="RHEA:21692"/>
        <dbReference type="ChEBI" id="CHEBI:15377"/>
        <dbReference type="ChEBI" id="CHEBI:15378"/>
        <dbReference type="ChEBI" id="CHEBI:57597"/>
        <dbReference type="ChEBI" id="CHEBI:58311"/>
        <dbReference type="ChEBI" id="CHEBI:60377"/>
        <dbReference type="EC" id="3.6.1.16"/>
    </reaction>
</comment>
<comment type="cofactor">
    <cofactor evidence="1">
        <name>Mg(2+)</name>
        <dbReference type="ChEBI" id="CHEBI:18420"/>
    </cofactor>
</comment>
<comment type="subunit">
    <text evidence="1">Monomer.</text>
</comment>
<comment type="alternative products">
    <event type="alternative splicing"/>
    <isoform>
        <id>Q3LIE5-1</id>
        <name>1</name>
        <sequence type="displayed"/>
    </isoform>
    <isoform>
        <id>Q3LIE5-3</id>
        <name>2</name>
        <sequence type="described" ref="VSP_025092 VSP_025093"/>
    </isoform>
</comment>
<comment type="miscellaneous">
    <molecule>Isoform 2</molecule>
    <text evidence="4">May be produced at very low levels due to a premature stop codon in the mRNA, leading to nonsense-mediated mRNA decay.</text>
</comment>
<comment type="similarity">
    <text evidence="4">Belongs to the ADPRibase-Mn family.</text>
</comment>
<comment type="sequence caution" evidence="4">
    <conflict type="frameshift">
        <sequence resource="EMBL-CDS" id="AAF87317"/>
    </conflict>
</comment>
<sequence length="342" mass="39529">MDDKPNPEALSDSSERLFSFGVIADVQFADLEDGFNFQGTRRRYYRHSLLHLQGAIEDWNNESSMPCCVLQLGDIIDGYNAQYNASKKSLELVMDMFKRLKVPVHHTWGNHEFYNFSREYLTHSKLNTKFLEDQIVHHPETMPSEDYYAYHFVPFPKFRFILLDAYDLSVLGVDQSSPKYEQCMKILREHNPNTELNSPQGLSEPQFVQFNGGFSQEQLNWLNEVLTFSDTNQEKVVIVSHLPIYPDASDNVCLAWNYRDALAVIWSHECVVCFFAGHTHDGGYSEDPFGVYHVNLEGVIETAPDSQAFGTVHVYPDKMMLKGRGRVPDRIMNYKKERAFHC</sequence>
<dbReference type="EC" id="3.6.1.13"/>
<dbReference type="EC" id="3.6.1.16"/>
<dbReference type="EC" id="3.6.1.53"/>
<dbReference type="EMBL" id="AB073393">
    <property type="protein sequence ID" value="BAE45723.1"/>
    <property type="molecule type" value="mRNA"/>
</dbReference>
<dbReference type="EMBL" id="AK292629">
    <property type="protein sequence ID" value="BAF85318.1"/>
    <property type="molecule type" value="mRNA"/>
</dbReference>
<dbReference type="EMBL" id="CH471108">
    <property type="protein sequence ID" value="EAW89995.1"/>
    <property type="molecule type" value="Genomic_DNA"/>
</dbReference>
<dbReference type="EMBL" id="CH471108">
    <property type="protein sequence ID" value="EAW89996.1"/>
    <property type="molecule type" value="Genomic_DNA"/>
</dbReference>
<dbReference type="EMBL" id="BC001294">
    <property type="protein sequence ID" value="AAH01294.1"/>
    <property type="molecule type" value="mRNA"/>
</dbReference>
<dbReference type="EMBL" id="BC070155">
    <property type="protein sequence ID" value="AAH70155.1"/>
    <property type="molecule type" value="mRNA"/>
</dbReference>
<dbReference type="EMBL" id="AF168715">
    <property type="protein sequence ID" value="AAF87317.1"/>
    <property type="status" value="ALT_FRAME"/>
    <property type="molecule type" value="mRNA"/>
</dbReference>
<dbReference type="CCDS" id="CCDS11159.2">
    <molecule id="Q3LIE5-1"/>
</dbReference>
<dbReference type="RefSeq" id="NP_064618.3">
    <molecule id="Q3LIE5-1"/>
    <property type="nucleotide sequence ID" value="NM_020233.4"/>
</dbReference>
<dbReference type="SMR" id="Q3LIE5"/>
<dbReference type="BioGRID" id="121302">
    <property type="interactions" value="5"/>
</dbReference>
<dbReference type="FunCoup" id="Q3LIE5">
    <property type="interactions" value="1117"/>
</dbReference>
<dbReference type="IntAct" id="Q3LIE5">
    <property type="interactions" value="1"/>
</dbReference>
<dbReference type="STRING" id="9606.ENSP00000369099"/>
<dbReference type="iPTMnet" id="Q3LIE5"/>
<dbReference type="PhosphoSitePlus" id="Q3LIE5"/>
<dbReference type="BioMuta" id="ADPRM"/>
<dbReference type="DMDM" id="121942723"/>
<dbReference type="jPOST" id="Q3LIE5"/>
<dbReference type="MassIVE" id="Q3LIE5"/>
<dbReference type="PaxDb" id="9606-ENSP00000369099"/>
<dbReference type="PeptideAtlas" id="Q3LIE5"/>
<dbReference type="ProteomicsDB" id="61776">
    <molecule id="Q3LIE5-1"/>
</dbReference>
<dbReference type="ProteomicsDB" id="61777">
    <molecule id="Q3LIE5-3"/>
</dbReference>
<dbReference type="Pumba" id="Q3LIE5"/>
<dbReference type="Antibodypedia" id="12941">
    <property type="antibodies" value="66 antibodies from 17 providers"/>
</dbReference>
<dbReference type="DNASU" id="56985"/>
<dbReference type="Ensembl" id="ENST00000379774.5">
    <molecule id="Q3LIE5-1"/>
    <property type="protein sequence ID" value="ENSP00000369099.4"/>
    <property type="gene ID" value="ENSG00000170222.12"/>
</dbReference>
<dbReference type="Ensembl" id="ENST00000468843.1">
    <molecule id="Q3LIE5-3"/>
    <property type="protein sequence ID" value="ENSP00000431622.1"/>
    <property type="gene ID" value="ENSG00000170222.12"/>
</dbReference>
<dbReference type="GeneID" id="56985"/>
<dbReference type="KEGG" id="hsa:56985"/>
<dbReference type="MANE-Select" id="ENST00000379774.5">
    <property type="protein sequence ID" value="ENSP00000369099.4"/>
    <property type="RefSeq nucleotide sequence ID" value="NM_020233.5"/>
    <property type="RefSeq protein sequence ID" value="NP_064618.3"/>
</dbReference>
<dbReference type="UCSC" id="uc060bgm.1">
    <molecule id="Q3LIE5-1"/>
    <property type="organism name" value="human"/>
</dbReference>
<dbReference type="AGR" id="HGNC:30925"/>
<dbReference type="CTD" id="56985"/>
<dbReference type="GeneCards" id="ADPRM"/>
<dbReference type="HGNC" id="HGNC:30925">
    <property type="gene designation" value="ADPRM"/>
</dbReference>
<dbReference type="HPA" id="ENSG00000170222">
    <property type="expression patterns" value="Low tissue specificity"/>
</dbReference>
<dbReference type="neXtProt" id="NX_Q3LIE5"/>
<dbReference type="OpenTargets" id="ENSG00000170222"/>
<dbReference type="PharmGKB" id="PA142672231"/>
<dbReference type="VEuPathDB" id="HostDB:ENSG00000170222"/>
<dbReference type="eggNOG" id="ENOG502QUQW">
    <property type="taxonomic scope" value="Eukaryota"/>
</dbReference>
<dbReference type="GeneTree" id="ENSGT00390000014667"/>
<dbReference type="HOGENOM" id="CLU_039893_0_0_1"/>
<dbReference type="InParanoid" id="Q3LIE5"/>
<dbReference type="OMA" id="GHNHAGN"/>
<dbReference type="OrthoDB" id="9675250at2759"/>
<dbReference type="PAN-GO" id="Q3LIE5">
    <property type="GO annotations" value="4 GO annotations based on evolutionary models"/>
</dbReference>
<dbReference type="PhylomeDB" id="Q3LIE5"/>
<dbReference type="TreeFam" id="TF331229"/>
<dbReference type="BRENDA" id="3.6.1.13">
    <property type="organism ID" value="2681"/>
</dbReference>
<dbReference type="BRENDA" id="3.6.1.53">
    <property type="organism ID" value="2681"/>
</dbReference>
<dbReference type="PathwayCommons" id="Q3LIE5"/>
<dbReference type="Reactome" id="R-HSA-2393930">
    <property type="pathway name" value="Phosphate bond hydrolysis by NUDT proteins"/>
</dbReference>
<dbReference type="BioGRID-ORCS" id="56985">
    <property type="hits" value="22 hits in 1163 CRISPR screens"/>
</dbReference>
<dbReference type="ChiTaRS" id="ADPRM">
    <property type="organism name" value="human"/>
</dbReference>
<dbReference type="GenomeRNAi" id="56985"/>
<dbReference type="Pharos" id="Q3LIE5">
    <property type="development level" value="Tbio"/>
</dbReference>
<dbReference type="PRO" id="PR:Q3LIE5"/>
<dbReference type="Proteomes" id="UP000005640">
    <property type="component" value="Chromosome 17"/>
</dbReference>
<dbReference type="RNAct" id="Q3LIE5">
    <property type="molecule type" value="protein"/>
</dbReference>
<dbReference type="Bgee" id="ENSG00000170222">
    <property type="expression patterns" value="Expressed in male germ line stem cell (sensu Vertebrata) in testis and 159 other cell types or tissues"/>
</dbReference>
<dbReference type="ExpressionAtlas" id="Q3LIE5">
    <property type="expression patterns" value="baseline and differential"/>
</dbReference>
<dbReference type="GO" id="GO:0005829">
    <property type="term" value="C:cytosol"/>
    <property type="evidence" value="ECO:0000304"/>
    <property type="project" value="Reactome"/>
</dbReference>
<dbReference type="GO" id="GO:0008663">
    <property type="term" value="F:2',3'-cyclic-nucleotide 2'-phosphodiesterase activity"/>
    <property type="evidence" value="ECO:0000318"/>
    <property type="project" value="GO_Central"/>
</dbReference>
<dbReference type="GO" id="GO:0047631">
    <property type="term" value="F:ADP-ribose diphosphatase activity"/>
    <property type="evidence" value="ECO:0000318"/>
    <property type="project" value="GO_Central"/>
</dbReference>
<dbReference type="GO" id="GO:0047734">
    <property type="term" value="F:CDP-glycerol diphosphatase activity"/>
    <property type="evidence" value="ECO:0000318"/>
    <property type="project" value="GO_Central"/>
</dbReference>
<dbReference type="GO" id="GO:0030145">
    <property type="term" value="F:manganese ion binding"/>
    <property type="evidence" value="ECO:0000318"/>
    <property type="project" value="GO_Central"/>
</dbReference>
<dbReference type="CDD" id="cd07396">
    <property type="entry name" value="MPP_Nbla03831"/>
    <property type="match status" value="1"/>
</dbReference>
<dbReference type="FunFam" id="3.60.21.10:FF:000067">
    <property type="entry name" value="Manganese-dependent ADP-ribose/CDP-alcohol diphosphatase"/>
    <property type="match status" value="1"/>
</dbReference>
<dbReference type="Gene3D" id="3.60.21.10">
    <property type="match status" value="1"/>
</dbReference>
<dbReference type="InterPro" id="IPR004843">
    <property type="entry name" value="Calcineurin-like_PHP_ApaH"/>
</dbReference>
<dbReference type="InterPro" id="IPR029052">
    <property type="entry name" value="Metallo-depent_PP-like"/>
</dbReference>
<dbReference type="InterPro" id="IPR041869">
    <property type="entry name" value="MPP_ADPRM"/>
</dbReference>
<dbReference type="PANTHER" id="PTHR16509">
    <property type="match status" value="1"/>
</dbReference>
<dbReference type="PANTHER" id="PTHR16509:SF1">
    <property type="entry name" value="MANGANESE-DEPENDENT ADP-RIBOSE_CDP-ALCOHOL DIPHOSPHATASE"/>
    <property type="match status" value="1"/>
</dbReference>
<dbReference type="Pfam" id="PF00149">
    <property type="entry name" value="Metallophos"/>
    <property type="match status" value="1"/>
</dbReference>
<dbReference type="SUPFAM" id="SSF56300">
    <property type="entry name" value="Metallo-dependent phosphatases"/>
    <property type="match status" value="1"/>
</dbReference>
<name>ADPRM_HUMAN</name>
<proteinExistence type="evidence at protein level"/>
<gene>
    <name type="primary">ADPRM</name>
    <name type="synonym">C17orf48</name>
    <name type="ORF">MDS006</name>
    <name type="ORF">Nbla03831</name>
</gene>
<protein>
    <recommendedName>
        <fullName>Manganese-dependent ADP-ribose/CDP-alcohol diphosphatase</fullName>
        <ecNumber>3.6.1.13</ecNumber>
        <ecNumber>3.6.1.16</ecNumber>
        <ecNumber>3.6.1.53</ecNumber>
    </recommendedName>
    <alternativeName>
        <fullName>ADPRibase-Mn</fullName>
    </alternativeName>
    <alternativeName>
        <fullName>CDP-choline phosphohydrolase</fullName>
    </alternativeName>
</protein>
<organism>
    <name type="scientific">Homo sapiens</name>
    <name type="common">Human</name>
    <dbReference type="NCBI Taxonomy" id="9606"/>
    <lineage>
        <taxon>Eukaryota</taxon>
        <taxon>Metazoa</taxon>
        <taxon>Chordata</taxon>
        <taxon>Craniata</taxon>
        <taxon>Vertebrata</taxon>
        <taxon>Euteleostomi</taxon>
        <taxon>Mammalia</taxon>
        <taxon>Eutheria</taxon>
        <taxon>Euarchontoglires</taxon>
        <taxon>Primates</taxon>
        <taxon>Haplorrhini</taxon>
        <taxon>Catarrhini</taxon>
        <taxon>Hominidae</taxon>
        <taxon>Homo</taxon>
    </lineage>
</organism>
<evidence type="ECO:0000250" key="1"/>
<evidence type="ECO:0000303" key="2">
    <source>
    </source>
</evidence>
<evidence type="ECO:0000303" key="3">
    <source>
    </source>
</evidence>
<evidence type="ECO:0000305" key="4"/>
<evidence type="ECO:0007744" key="5">
    <source>
    </source>
</evidence>
<keyword id="KW-0007">Acetylation</keyword>
<keyword id="KW-0025">Alternative splicing</keyword>
<keyword id="KW-0378">Hydrolase</keyword>
<keyword id="KW-0479">Metal-binding</keyword>
<keyword id="KW-1267">Proteomics identification</keyword>
<keyword id="KW-1185">Reference proteome</keyword>
<keyword id="KW-0862">Zinc</keyword>
<accession>Q3LIE5</accession>
<accession>A8K9B4</accession>
<accession>D3DTS4</accession>
<accession>Q9BVD4</accession>
<accession>Q9NRU8</accession>